<sequence length="146" mass="16572">MRLLQLLFRASPATLLLVLCLQLGANKAQDNTRKIIIKNFDIPKSVRPNDEVTAVLAVQTELKECMVVKTYLISSIPLQGAFNYKYTACLCDDNPKTFYWDFYTNRTVQIAAVVDVIRELGICPDDAAVIPIKNNRFYTIEILKVE</sequence>
<protein>
    <recommendedName>
        <fullName>Prolactin-inducible protein</fullName>
    </recommendedName>
    <alternativeName>
        <fullName>Gross cystic disease fluid protein 15</fullName>
        <shortName>GCDFP-15</shortName>
    </alternativeName>
    <alternativeName>
        <fullName>Prolactin-induced protein</fullName>
    </alternativeName>
    <alternativeName>
        <fullName>Secretory actin-binding protein</fullName>
        <shortName>SABP</shortName>
    </alternativeName>
    <alternativeName>
        <fullName>gp17</fullName>
    </alternativeName>
</protein>
<gene>
    <name type="primary">PIP</name>
    <name type="synonym">GCDFP15</name>
    <name type="synonym">GPIP4</name>
</gene>
<dbReference type="EMBL" id="J03460">
    <property type="protein sequence ID" value="AAA60091.1"/>
    <property type="molecule type" value="mRNA"/>
</dbReference>
<dbReference type="EMBL" id="X51501">
    <property type="protein sequence ID" value="CAA35870.1"/>
    <property type="molecule type" value="Genomic_DNA"/>
</dbReference>
<dbReference type="EMBL" id="X51502">
    <property type="protein sequence ID" value="CAA35870.1"/>
    <property type="status" value="JOINED"/>
    <property type="molecule type" value="Genomic_DNA"/>
</dbReference>
<dbReference type="EMBL" id="X51504">
    <property type="protein sequence ID" value="CAA35870.1"/>
    <property type="status" value="JOINED"/>
    <property type="molecule type" value="Genomic_DNA"/>
</dbReference>
<dbReference type="EMBL" id="Y10179">
    <property type="protein sequence ID" value="CAA71252.1"/>
    <property type="molecule type" value="mRNA"/>
</dbReference>
<dbReference type="EMBL" id="AK312227">
    <property type="protein sequence ID" value="BAG35160.1"/>
    <property type="molecule type" value="mRNA"/>
</dbReference>
<dbReference type="EMBL" id="CH236959">
    <property type="protein sequence ID" value="EAL23781.1"/>
    <property type="molecule type" value="Genomic_DNA"/>
</dbReference>
<dbReference type="EMBL" id="CH471198">
    <property type="protein sequence ID" value="EAW51887.1"/>
    <property type="molecule type" value="Genomic_DNA"/>
</dbReference>
<dbReference type="EMBL" id="BC010950">
    <property type="protein sequence ID" value="AAH10950.1"/>
    <property type="molecule type" value="mRNA"/>
</dbReference>
<dbReference type="EMBL" id="BC010951">
    <property type="protein sequence ID" value="AAH10951.1"/>
    <property type="molecule type" value="mRNA"/>
</dbReference>
<dbReference type="EMBL" id="AB267097">
    <property type="protein sequence ID" value="BAF35627.1"/>
    <property type="molecule type" value="Genomic_DNA"/>
</dbReference>
<dbReference type="EMBL" id="AB267098">
    <property type="protein sequence ID" value="BAF35628.1"/>
    <property type="molecule type" value="Genomic_DNA"/>
</dbReference>
<dbReference type="EMBL" id="AB267099">
    <property type="protein sequence ID" value="BAF35629.1"/>
    <property type="molecule type" value="Genomic_DNA"/>
</dbReference>
<dbReference type="EMBL" id="AB267100">
    <property type="protein sequence ID" value="BAF35630.1"/>
    <property type="molecule type" value="Genomic_DNA"/>
</dbReference>
<dbReference type="EMBL" id="AB267101">
    <property type="protein sequence ID" value="BAF35631.1"/>
    <property type="molecule type" value="Genomic_DNA"/>
</dbReference>
<dbReference type="EMBL" id="AB267102">
    <property type="protein sequence ID" value="BAF35632.1"/>
    <property type="molecule type" value="Genomic_DNA"/>
</dbReference>
<dbReference type="EMBL" id="AB267103">
    <property type="protein sequence ID" value="BAF35633.1"/>
    <property type="molecule type" value="Genomic_DNA"/>
</dbReference>
<dbReference type="EMBL" id="AB267104">
    <property type="protein sequence ID" value="BAF35634.1"/>
    <property type="molecule type" value="Genomic_DNA"/>
</dbReference>
<dbReference type="EMBL" id="AB267105">
    <property type="protein sequence ID" value="BAF35635.1"/>
    <property type="molecule type" value="Genomic_DNA"/>
</dbReference>
<dbReference type="EMBL" id="AB267106">
    <property type="protein sequence ID" value="BAF35636.1"/>
    <property type="molecule type" value="Genomic_DNA"/>
</dbReference>
<dbReference type="EMBL" id="AB267107">
    <property type="protein sequence ID" value="BAF35637.1"/>
    <property type="molecule type" value="Genomic_DNA"/>
</dbReference>
<dbReference type="EMBL" id="AB267108">
    <property type="protein sequence ID" value="BAF35638.1"/>
    <property type="molecule type" value="Genomic_DNA"/>
</dbReference>
<dbReference type="EMBL" id="AB267109">
    <property type="protein sequence ID" value="BAF35639.1"/>
    <property type="molecule type" value="Genomic_DNA"/>
</dbReference>
<dbReference type="EMBL" id="AB267110">
    <property type="protein sequence ID" value="BAF35640.1"/>
    <property type="molecule type" value="Genomic_DNA"/>
</dbReference>
<dbReference type="EMBL" id="AB267111">
    <property type="protein sequence ID" value="BAF35641.1"/>
    <property type="molecule type" value="Genomic_DNA"/>
</dbReference>
<dbReference type="EMBL" id="AB267112">
    <property type="protein sequence ID" value="BAF35642.1"/>
    <property type="molecule type" value="Genomic_DNA"/>
</dbReference>
<dbReference type="EMBL" id="AB267113">
    <property type="protein sequence ID" value="BAF35643.1"/>
    <property type="molecule type" value="Genomic_DNA"/>
</dbReference>
<dbReference type="EMBL" id="AB267114">
    <property type="protein sequence ID" value="BAF35644.1"/>
    <property type="molecule type" value="Genomic_DNA"/>
</dbReference>
<dbReference type="EMBL" id="AB267115">
    <property type="protein sequence ID" value="BAF35645.1"/>
    <property type="molecule type" value="Genomic_DNA"/>
</dbReference>
<dbReference type="EMBL" id="AB267116">
    <property type="protein sequence ID" value="BAF35646.1"/>
    <property type="molecule type" value="Genomic_DNA"/>
</dbReference>
<dbReference type="EMBL" id="AB267117">
    <property type="protein sequence ID" value="BAF35647.1"/>
    <property type="molecule type" value="Genomic_DNA"/>
</dbReference>
<dbReference type="EMBL" id="AB267118">
    <property type="protein sequence ID" value="BAF35648.1"/>
    <property type="molecule type" value="Genomic_DNA"/>
</dbReference>
<dbReference type="EMBL" id="AB267119">
    <property type="protein sequence ID" value="BAF35649.1"/>
    <property type="molecule type" value="Genomic_DNA"/>
</dbReference>
<dbReference type="EMBL" id="AB267120">
    <property type="protein sequence ID" value="BAF35650.1"/>
    <property type="molecule type" value="Genomic_DNA"/>
</dbReference>
<dbReference type="EMBL" id="AB267121">
    <property type="protein sequence ID" value="BAF35651.1"/>
    <property type="molecule type" value="Genomic_DNA"/>
</dbReference>
<dbReference type="EMBL" id="AB267122">
    <property type="protein sequence ID" value="BAF35652.1"/>
    <property type="molecule type" value="Genomic_DNA"/>
</dbReference>
<dbReference type="EMBL" id="AB267123">
    <property type="protein sequence ID" value="BAF35653.1"/>
    <property type="molecule type" value="Genomic_DNA"/>
</dbReference>
<dbReference type="EMBL" id="AB267124">
    <property type="protein sequence ID" value="BAF35654.1"/>
    <property type="molecule type" value="Genomic_DNA"/>
</dbReference>
<dbReference type="EMBL" id="AB267125">
    <property type="protein sequence ID" value="BAF35655.1"/>
    <property type="molecule type" value="Genomic_DNA"/>
</dbReference>
<dbReference type="EMBL" id="AB267126">
    <property type="protein sequence ID" value="BAF35656.1"/>
    <property type="molecule type" value="Genomic_DNA"/>
</dbReference>
<dbReference type="EMBL" id="AB267127">
    <property type="protein sequence ID" value="BAF35657.1"/>
    <property type="molecule type" value="Genomic_DNA"/>
</dbReference>
<dbReference type="EMBL" id="AB267128">
    <property type="protein sequence ID" value="BAF35658.1"/>
    <property type="molecule type" value="Genomic_DNA"/>
</dbReference>
<dbReference type="EMBL" id="AB267129">
    <property type="protein sequence ID" value="BAF35659.1"/>
    <property type="molecule type" value="Genomic_DNA"/>
</dbReference>
<dbReference type="EMBL" id="AB267130">
    <property type="protein sequence ID" value="BAF35660.1"/>
    <property type="molecule type" value="Genomic_DNA"/>
</dbReference>
<dbReference type="EMBL" id="AB267131">
    <property type="protein sequence ID" value="BAF35661.1"/>
    <property type="molecule type" value="Genomic_DNA"/>
</dbReference>
<dbReference type="EMBL" id="AB267132">
    <property type="protein sequence ID" value="BAF35662.1"/>
    <property type="molecule type" value="Genomic_DNA"/>
</dbReference>
<dbReference type="EMBL" id="AB267133">
    <property type="protein sequence ID" value="BAF35663.1"/>
    <property type="molecule type" value="Genomic_DNA"/>
</dbReference>
<dbReference type="EMBL" id="AB267134">
    <property type="protein sequence ID" value="BAF35664.1"/>
    <property type="molecule type" value="Genomic_DNA"/>
</dbReference>
<dbReference type="EMBL" id="AB267135">
    <property type="protein sequence ID" value="BAF35665.1"/>
    <property type="molecule type" value="Genomic_DNA"/>
</dbReference>
<dbReference type="EMBL" id="AB267136">
    <property type="protein sequence ID" value="BAF35666.1"/>
    <property type="molecule type" value="Genomic_DNA"/>
</dbReference>
<dbReference type="EMBL" id="AB267137">
    <property type="protein sequence ID" value="BAF35667.1"/>
    <property type="molecule type" value="Genomic_DNA"/>
</dbReference>
<dbReference type="EMBL" id="AB267138">
    <property type="protein sequence ID" value="BAF35668.1"/>
    <property type="molecule type" value="Genomic_DNA"/>
</dbReference>
<dbReference type="EMBL" id="AB267139">
    <property type="protein sequence ID" value="BAF35669.1"/>
    <property type="molecule type" value="Genomic_DNA"/>
</dbReference>
<dbReference type="EMBL" id="AB267140">
    <property type="protein sequence ID" value="BAF35670.1"/>
    <property type="molecule type" value="Genomic_DNA"/>
</dbReference>
<dbReference type="EMBL" id="AB267141">
    <property type="protein sequence ID" value="BAF35671.1"/>
    <property type="molecule type" value="Genomic_DNA"/>
</dbReference>
<dbReference type="EMBL" id="AB267142">
    <property type="protein sequence ID" value="BAF35672.1"/>
    <property type="molecule type" value="Genomic_DNA"/>
</dbReference>
<dbReference type="EMBL" id="AB267143">
    <property type="protein sequence ID" value="BAF35673.1"/>
    <property type="molecule type" value="Genomic_DNA"/>
</dbReference>
<dbReference type="EMBL" id="AB267144">
    <property type="protein sequence ID" value="BAF35674.1"/>
    <property type="molecule type" value="Genomic_DNA"/>
</dbReference>
<dbReference type="EMBL" id="AB267145">
    <property type="protein sequence ID" value="BAF35675.1"/>
    <property type="molecule type" value="Genomic_DNA"/>
</dbReference>
<dbReference type="EMBL" id="AB267146">
    <property type="protein sequence ID" value="BAF35676.1"/>
    <property type="molecule type" value="Genomic_DNA"/>
</dbReference>
<dbReference type="EMBL" id="AB267147">
    <property type="protein sequence ID" value="BAF35677.1"/>
    <property type="molecule type" value="Genomic_DNA"/>
</dbReference>
<dbReference type="EMBL" id="AB267148">
    <property type="protein sequence ID" value="BAF35678.1"/>
    <property type="molecule type" value="Genomic_DNA"/>
</dbReference>
<dbReference type="EMBL" id="AB267149">
    <property type="protein sequence ID" value="BAF35679.1"/>
    <property type="molecule type" value="Genomic_DNA"/>
</dbReference>
<dbReference type="EMBL" id="AB267150">
    <property type="protein sequence ID" value="BAF35680.1"/>
    <property type="molecule type" value="Genomic_DNA"/>
</dbReference>
<dbReference type="EMBL" id="AB267151">
    <property type="protein sequence ID" value="BAF35681.1"/>
    <property type="molecule type" value="Genomic_DNA"/>
</dbReference>
<dbReference type="EMBL" id="AB267152">
    <property type="protein sequence ID" value="BAF35682.1"/>
    <property type="molecule type" value="Genomic_DNA"/>
</dbReference>
<dbReference type="EMBL" id="AB267153">
    <property type="protein sequence ID" value="BAF35683.1"/>
    <property type="molecule type" value="Genomic_DNA"/>
</dbReference>
<dbReference type="EMBL" id="AB267154">
    <property type="protein sequence ID" value="BAF35684.1"/>
    <property type="molecule type" value="Genomic_DNA"/>
</dbReference>
<dbReference type="EMBL" id="AB267155">
    <property type="protein sequence ID" value="BAF35685.1"/>
    <property type="molecule type" value="Genomic_DNA"/>
</dbReference>
<dbReference type="EMBL" id="AB267156">
    <property type="protein sequence ID" value="BAF35686.1"/>
    <property type="molecule type" value="Genomic_DNA"/>
</dbReference>
<dbReference type="EMBL" id="AB267157">
    <property type="protein sequence ID" value="BAF35687.1"/>
    <property type="molecule type" value="Genomic_DNA"/>
</dbReference>
<dbReference type="EMBL" id="AB267158">
    <property type="protein sequence ID" value="BAF35688.1"/>
    <property type="molecule type" value="Genomic_DNA"/>
</dbReference>
<dbReference type="EMBL" id="AB267159">
    <property type="protein sequence ID" value="BAF35689.1"/>
    <property type="molecule type" value="Genomic_DNA"/>
</dbReference>
<dbReference type="EMBL" id="AB267160">
    <property type="protein sequence ID" value="BAF35690.1"/>
    <property type="molecule type" value="Genomic_DNA"/>
</dbReference>
<dbReference type="EMBL" id="AB267161">
    <property type="protein sequence ID" value="BAF35691.1"/>
    <property type="molecule type" value="Genomic_DNA"/>
</dbReference>
<dbReference type="EMBL" id="AB267162">
    <property type="protein sequence ID" value="BAF35692.1"/>
    <property type="molecule type" value="Genomic_DNA"/>
</dbReference>
<dbReference type="EMBL" id="AB267163">
    <property type="protein sequence ID" value="BAF35693.1"/>
    <property type="molecule type" value="Genomic_DNA"/>
</dbReference>
<dbReference type="EMBL" id="AB267164">
    <property type="protein sequence ID" value="BAF35694.1"/>
    <property type="molecule type" value="Genomic_DNA"/>
</dbReference>
<dbReference type="EMBL" id="AB267165">
    <property type="protein sequence ID" value="BAF35695.1"/>
    <property type="molecule type" value="Genomic_DNA"/>
</dbReference>
<dbReference type="EMBL" id="AB267166">
    <property type="protein sequence ID" value="BAF35696.1"/>
    <property type="molecule type" value="Genomic_DNA"/>
</dbReference>
<dbReference type="EMBL" id="AB267167">
    <property type="protein sequence ID" value="BAF35697.1"/>
    <property type="molecule type" value="Genomic_DNA"/>
</dbReference>
<dbReference type="EMBL" id="AB267168">
    <property type="protein sequence ID" value="BAF35698.1"/>
    <property type="molecule type" value="Genomic_DNA"/>
</dbReference>
<dbReference type="EMBL" id="AB267169">
    <property type="protein sequence ID" value="BAF35699.1"/>
    <property type="molecule type" value="Genomic_DNA"/>
</dbReference>
<dbReference type="EMBL" id="AB267170">
    <property type="protein sequence ID" value="BAF35700.1"/>
    <property type="molecule type" value="Genomic_DNA"/>
</dbReference>
<dbReference type="EMBL" id="AB267171">
    <property type="protein sequence ID" value="BAF35701.1"/>
    <property type="molecule type" value="Genomic_DNA"/>
</dbReference>
<dbReference type="EMBL" id="AB267172">
    <property type="protein sequence ID" value="BAF35702.1"/>
    <property type="molecule type" value="Genomic_DNA"/>
</dbReference>
<dbReference type="EMBL" id="AB267173">
    <property type="protein sequence ID" value="BAF35703.1"/>
    <property type="molecule type" value="Genomic_DNA"/>
</dbReference>
<dbReference type="EMBL" id="AB267174">
    <property type="protein sequence ID" value="BAF35704.1"/>
    <property type="molecule type" value="Genomic_DNA"/>
</dbReference>
<dbReference type="EMBL" id="AB267175">
    <property type="protein sequence ID" value="BAF35705.1"/>
    <property type="molecule type" value="Genomic_DNA"/>
</dbReference>
<dbReference type="EMBL" id="AB267176">
    <property type="protein sequence ID" value="BAF35706.1"/>
    <property type="molecule type" value="Genomic_DNA"/>
</dbReference>
<dbReference type="EMBL" id="AB267177">
    <property type="protein sequence ID" value="BAF35707.1"/>
    <property type="molecule type" value="Genomic_DNA"/>
</dbReference>
<dbReference type="EMBL" id="AB267178">
    <property type="protein sequence ID" value="BAF35708.1"/>
    <property type="molecule type" value="Genomic_DNA"/>
</dbReference>
<dbReference type="EMBL" id="AB267179">
    <property type="protein sequence ID" value="BAF35709.1"/>
    <property type="molecule type" value="Genomic_DNA"/>
</dbReference>
<dbReference type="EMBL" id="AB267180">
    <property type="protein sequence ID" value="BAF35710.1"/>
    <property type="molecule type" value="Genomic_DNA"/>
</dbReference>
<dbReference type="EMBL" id="AB267181">
    <property type="protein sequence ID" value="BAF35711.1"/>
    <property type="molecule type" value="Genomic_DNA"/>
</dbReference>
<dbReference type="EMBL" id="AB267182">
    <property type="protein sequence ID" value="BAF35712.1"/>
    <property type="molecule type" value="Genomic_DNA"/>
</dbReference>
<dbReference type="EMBL" id="AB267183">
    <property type="protein sequence ID" value="BAF35713.1"/>
    <property type="molecule type" value="Genomic_DNA"/>
</dbReference>
<dbReference type="EMBL" id="AB267184">
    <property type="protein sequence ID" value="BAF35714.1"/>
    <property type="molecule type" value="Genomic_DNA"/>
</dbReference>
<dbReference type="EMBL" id="AB267185">
    <property type="protein sequence ID" value="BAF35715.1"/>
    <property type="molecule type" value="Genomic_DNA"/>
</dbReference>
<dbReference type="EMBL" id="AB267186">
    <property type="protein sequence ID" value="BAF35716.1"/>
    <property type="molecule type" value="Genomic_DNA"/>
</dbReference>
<dbReference type="EMBL" id="AB267187">
    <property type="protein sequence ID" value="BAF35717.1"/>
    <property type="molecule type" value="Genomic_DNA"/>
</dbReference>
<dbReference type="EMBL" id="AB267188">
    <property type="protein sequence ID" value="BAF35718.1"/>
    <property type="molecule type" value="Genomic_DNA"/>
</dbReference>
<dbReference type="EMBL" id="AB267189">
    <property type="protein sequence ID" value="BAF35719.1"/>
    <property type="molecule type" value="Genomic_DNA"/>
</dbReference>
<dbReference type="EMBL" id="AB267190">
    <property type="protein sequence ID" value="BAF35720.1"/>
    <property type="molecule type" value="Genomic_DNA"/>
</dbReference>
<dbReference type="EMBL" id="AB267191">
    <property type="protein sequence ID" value="BAF35721.1"/>
    <property type="molecule type" value="Genomic_DNA"/>
</dbReference>
<dbReference type="EMBL" id="AB267192">
    <property type="protein sequence ID" value="BAF35722.1"/>
    <property type="molecule type" value="Genomic_DNA"/>
</dbReference>
<dbReference type="EMBL" id="AB267193">
    <property type="protein sequence ID" value="BAF35723.1"/>
    <property type="molecule type" value="Genomic_DNA"/>
</dbReference>
<dbReference type="EMBL" id="AB267194">
    <property type="protein sequence ID" value="BAF35724.1"/>
    <property type="molecule type" value="Genomic_DNA"/>
</dbReference>
<dbReference type="EMBL" id="AB267195">
    <property type="protein sequence ID" value="BAF35725.1"/>
    <property type="molecule type" value="Genomic_DNA"/>
</dbReference>
<dbReference type="EMBL" id="AB267196">
    <property type="protein sequence ID" value="BAF35726.1"/>
    <property type="molecule type" value="Genomic_DNA"/>
</dbReference>
<dbReference type="EMBL" id="AB267197">
    <property type="protein sequence ID" value="BAF35727.1"/>
    <property type="molecule type" value="Genomic_DNA"/>
</dbReference>
<dbReference type="EMBL" id="AB267198">
    <property type="protein sequence ID" value="BAF35728.1"/>
    <property type="molecule type" value="Genomic_DNA"/>
</dbReference>
<dbReference type="EMBL" id="AB267199">
    <property type="protein sequence ID" value="BAF35729.1"/>
    <property type="molecule type" value="Genomic_DNA"/>
</dbReference>
<dbReference type="EMBL" id="AB267200">
    <property type="protein sequence ID" value="BAF35730.1"/>
    <property type="molecule type" value="Genomic_DNA"/>
</dbReference>
<dbReference type="EMBL" id="AB267201">
    <property type="protein sequence ID" value="BAF35731.1"/>
    <property type="molecule type" value="Genomic_DNA"/>
</dbReference>
<dbReference type="EMBL" id="AB267202">
    <property type="protein sequence ID" value="BAF35732.1"/>
    <property type="molecule type" value="Genomic_DNA"/>
</dbReference>
<dbReference type="EMBL" id="AB267203">
    <property type="protein sequence ID" value="BAF35733.1"/>
    <property type="molecule type" value="Genomic_DNA"/>
</dbReference>
<dbReference type="EMBL" id="AB267204">
    <property type="protein sequence ID" value="BAF35734.1"/>
    <property type="molecule type" value="Genomic_DNA"/>
</dbReference>
<dbReference type="EMBL" id="AB267205">
    <property type="protein sequence ID" value="BAF35735.1"/>
    <property type="molecule type" value="Genomic_DNA"/>
</dbReference>
<dbReference type="EMBL" id="AB267206">
    <property type="protein sequence ID" value="BAF35736.1"/>
    <property type="molecule type" value="Genomic_DNA"/>
</dbReference>
<dbReference type="EMBL" id="AB267207">
    <property type="protein sequence ID" value="BAF35737.1"/>
    <property type="molecule type" value="Genomic_DNA"/>
</dbReference>
<dbReference type="EMBL" id="AB267208">
    <property type="protein sequence ID" value="BAF35738.1"/>
    <property type="molecule type" value="Genomic_DNA"/>
</dbReference>
<dbReference type="EMBL" id="AB267209">
    <property type="protein sequence ID" value="BAF35739.1"/>
    <property type="molecule type" value="Genomic_DNA"/>
</dbReference>
<dbReference type="EMBL" id="AB267210">
    <property type="protein sequence ID" value="BAF35740.1"/>
    <property type="molecule type" value="Genomic_DNA"/>
</dbReference>
<dbReference type="EMBL" id="AB267211">
    <property type="protein sequence ID" value="BAF35741.1"/>
    <property type="molecule type" value="Genomic_DNA"/>
</dbReference>
<dbReference type="EMBL" id="AB267212">
    <property type="protein sequence ID" value="BAF35742.1"/>
    <property type="molecule type" value="Genomic_DNA"/>
</dbReference>
<dbReference type="EMBL" id="AB267213">
    <property type="protein sequence ID" value="BAF35743.1"/>
    <property type="molecule type" value="Genomic_DNA"/>
</dbReference>
<dbReference type="EMBL" id="AB267214">
    <property type="protein sequence ID" value="BAF35744.1"/>
    <property type="molecule type" value="Genomic_DNA"/>
</dbReference>
<dbReference type="EMBL" id="AB267215">
    <property type="protein sequence ID" value="BAF35745.1"/>
    <property type="molecule type" value="Genomic_DNA"/>
</dbReference>
<dbReference type="EMBL" id="AB267216">
    <property type="protein sequence ID" value="BAF35746.1"/>
    <property type="molecule type" value="Genomic_DNA"/>
</dbReference>
<dbReference type="CCDS" id="CCDS34768.1"/>
<dbReference type="PIR" id="I37432">
    <property type="entry name" value="SQHUAC"/>
</dbReference>
<dbReference type="RefSeq" id="NP_002643.1">
    <property type="nucleotide sequence ID" value="NM_002652.3"/>
</dbReference>
<dbReference type="PDB" id="3ES6">
    <property type="method" value="X-ray"/>
    <property type="resolution" value="3.23 A"/>
    <property type="chains" value="B=29-146"/>
</dbReference>
<dbReference type="PDBsum" id="3ES6"/>
<dbReference type="SMR" id="P12273"/>
<dbReference type="BioGRID" id="111321">
    <property type="interactions" value="208"/>
</dbReference>
<dbReference type="CORUM" id="P12273"/>
<dbReference type="FunCoup" id="P12273">
    <property type="interactions" value="368"/>
</dbReference>
<dbReference type="IntAct" id="P12273">
    <property type="interactions" value="150"/>
</dbReference>
<dbReference type="MINT" id="P12273"/>
<dbReference type="STRING" id="9606.ENSP00000291009"/>
<dbReference type="GlyConnect" id="1636">
    <property type="glycosylation" value="67 N-Linked glycans (1 site)"/>
</dbReference>
<dbReference type="GlyCosmos" id="P12273">
    <property type="glycosylation" value="1 site, 67 glycans"/>
</dbReference>
<dbReference type="GlyGen" id="P12273">
    <property type="glycosylation" value="1 site, 74 N-linked glycans (1 site)"/>
</dbReference>
<dbReference type="iPTMnet" id="P12273"/>
<dbReference type="PhosphoSitePlus" id="P12273"/>
<dbReference type="SwissPalm" id="P12273"/>
<dbReference type="BioMuta" id="PIP"/>
<dbReference type="DMDM" id="134170"/>
<dbReference type="jPOST" id="P12273"/>
<dbReference type="MassIVE" id="P12273"/>
<dbReference type="PaxDb" id="9606-ENSP00000291009"/>
<dbReference type="PeptideAtlas" id="P12273"/>
<dbReference type="PRIDE" id="P12273"/>
<dbReference type="ProteomicsDB" id="52845"/>
<dbReference type="Antibodypedia" id="2216">
    <property type="antibodies" value="637 antibodies from 40 providers"/>
</dbReference>
<dbReference type="DNASU" id="5304"/>
<dbReference type="Ensembl" id="ENST00000291009.4">
    <property type="protein sequence ID" value="ENSP00000291009.3"/>
    <property type="gene ID" value="ENSG00000159763.4"/>
</dbReference>
<dbReference type="GeneID" id="5304"/>
<dbReference type="KEGG" id="hsa:5304"/>
<dbReference type="MANE-Select" id="ENST00000291009.4">
    <property type="protein sequence ID" value="ENSP00000291009.3"/>
    <property type="RefSeq nucleotide sequence ID" value="NM_002652.3"/>
    <property type="RefSeq protein sequence ID" value="NP_002643.1"/>
</dbReference>
<dbReference type="UCSC" id="uc003wcf.2">
    <property type="organism name" value="human"/>
</dbReference>
<dbReference type="AGR" id="HGNC:8993"/>
<dbReference type="CTD" id="5304"/>
<dbReference type="DisGeNET" id="5304"/>
<dbReference type="GeneCards" id="PIP"/>
<dbReference type="HGNC" id="HGNC:8993">
    <property type="gene designation" value="PIP"/>
</dbReference>
<dbReference type="HPA" id="ENSG00000159763">
    <property type="expression patterns" value="Tissue enriched (salivary)"/>
</dbReference>
<dbReference type="MIM" id="176720">
    <property type="type" value="gene"/>
</dbReference>
<dbReference type="neXtProt" id="NX_P12273"/>
<dbReference type="OpenTargets" id="ENSG00000159763"/>
<dbReference type="PharmGKB" id="PA33326"/>
<dbReference type="VEuPathDB" id="HostDB:ENSG00000159763"/>
<dbReference type="eggNOG" id="ENOG502T2PG">
    <property type="taxonomic scope" value="Eukaryota"/>
</dbReference>
<dbReference type="GeneTree" id="ENSGT00390000002099"/>
<dbReference type="HOGENOM" id="CLU_148761_0_0_1"/>
<dbReference type="InParanoid" id="P12273"/>
<dbReference type="OMA" id="ECMVIKT"/>
<dbReference type="OrthoDB" id="9835042at2759"/>
<dbReference type="PAN-GO" id="P12273">
    <property type="GO annotations" value="4 GO annotations based on evolutionary models"/>
</dbReference>
<dbReference type="PhylomeDB" id="P12273"/>
<dbReference type="TreeFam" id="TF336919"/>
<dbReference type="PathwayCommons" id="P12273"/>
<dbReference type="Reactome" id="R-HSA-5223345">
    <property type="pathway name" value="Miscellaneous transport and binding events"/>
</dbReference>
<dbReference type="SignaLink" id="P12273"/>
<dbReference type="BioGRID-ORCS" id="5304">
    <property type="hits" value="12 hits in 1133 CRISPR screens"/>
</dbReference>
<dbReference type="CD-CODE" id="232F8A39">
    <property type="entry name" value="P-body"/>
</dbReference>
<dbReference type="ChiTaRS" id="PIP">
    <property type="organism name" value="human"/>
</dbReference>
<dbReference type="EvolutionaryTrace" id="P12273"/>
<dbReference type="GeneWiki" id="Prolactin-induced_protein"/>
<dbReference type="GenomeRNAi" id="5304"/>
<dbReference type="Pharos" id="P12273">
    <property type="development level" value="Tbio"/>
</dbReference>
<dbReference type="PRO" id="PR:P12273"/>
<dbReference type="Proteomes" id="UP000005640">
    <property type="component" value="Chromosome 7"/>
</dbReference>
<dbReference type="RNAct" id="P12273">
    <property type="molecule type" value="protein"/>
</dbReference>
<dbReference type="Bgee" id="ENSG00000159763">
    <property type="expression patterns" value="Expressed in seminal vesicle and 121 other cell types or tissues"/>
</dbReference>
<dbReference type="GO" id="GO:0070062">
    <property type="term" value="C:extracellular exosome"/>
    <property type="evidence" value="ECO:0007005"/>
    <property type="project" value="UniProtKB"/>
</dbReference>
<dbReference type="GO" id="GO:0005576">
    <property type="term" value="C:extracellular region"/>
    <property type="evidence" value="ECO:0000304"/>
    <property type="project" value="Reactome"/>
</dbReference>
<dbReference type="GO" id="GO:0005615">
    <property type="term" value="C:extracellular space"/>
    <property type="evidence" value="ECO:0000314"/>
    <property type="project" value="UniProtKB"/>
</dbReference>
<dbReference type="GO" id="GO:0005634">
    <property type="term" value="C:nucleus"/>
    <property type="evidence" value="ECO:0000314"/>
    <property type="project" value="UniProtKB"/>
</dbReference>
<dbReference type="GO" id="GO:0003779">
    <property type="term" value="F:actin binding"/>
    <property type="evidence" value="ECO:0000303"/>
    <property type="project" value="UniProtKB"/>
</dbReference>
<dbReference type="GO" id="GO:0004190">
    <property type="term" value="F:aspartic-type endopeptidase activity"/>
    <property type="evidence" value="ECO:0000315"/>
    <property type="project" value="UniProtKB"/>
</dbReference>
<dbReference type="GO" id="GO:0042802">
    <property type="term" value="F:identical protein binding"/>
    <property type="evidence" value="ECO:0000353"/>
    <property type="project" value="UniProtKB"/>
</dbReference>
<dbReference type="GO" id="GO:0019864">
    <property type="term" value="F:IgG binding"/>
    <property type="evidence" value="ECO:0000314"/>
    <property type="project" value="UniProtKB"/>
</dbReference>
<dbReference type="GO" id="GO:0001580">
    <property type="term" value="P:detection of chemical stimulus involved in sensory perception of bitter taste"/>
    <property type="evidence" value="ECO:0000314"/>
    <property type="project" value="UniProtKB"/>
</dbReference>
<dbReference type="GO" id="GO:0070233">
    <property type="term" value="P:negative regulation of T cell apoptotic process"/>
    <property type="evidence" value="ECO:0000315"/>
    <property type="project" value="UniProtKB"/>
</dbReference>
<dbReference type="GO" id="GO:0010628">
    <property type="term" value="P:positive regulation of gene expression"/>
    <property type="evidence" value="ECO:0000314"/>
    <property type="project" value="UniProtKB"/>
</dbReference>
<dbReference type="GO" id="GO:0006508">
    <property type="term" value="P:proteolysis"/>
    <property type="evidence" value="ECO:0000315"/>
    <property type="project" value="UniProtKB"/>
</dbReference>
<dbReference type="GO" id="GO:0002682">
    <property type="term" value="P:regulation of immune system process"/>
    <property type="evidence" value="ECO:0000318"/>
    <property type="project" value="GO_Central"/>
</dbReference>
<dbReference type="FunFam" id="2.60.40.10:FF:001572">
    <property type="entry name" value="Prolactin-inducible protein homolog"/>
    <property type="match status" value="1"/>
</dbReference>
<dbReference type="Gene3D" id="2.60.40.10">
    <property type="entry name" value="Immunoglobulins"/>
    <property type="match status" value="1"/>
</dbReference>
<dbReference type="InterPro" id="IPR013783">
    <property type="entry name" value="Ig-like_fold"/>
</dbReference>
<dbReference type="InterPro" id="IPR014756">
    <property type="entry name" value="Ig_E-set"/>
</dbReference>
<dbReference type="InterPro" id="IPR007990">
    <property type="entry name" value="PIP"/>
</dbReference>
<dbReference type="PANTHER" id="PTHR15096:SF5">
    <property type="entry name" value="PROLACTIN-INDUCIBLE PROTEIN"/>
    <property type="match status" value="1"/>
</dbReference>
<dbReference type="PANTHER" id="PTHR15096">
    <property type="entry name" value="PROLACTIN-INDUCIBLE PROTEIN/SEMINAL VESICLE ANTIGEN"/>
    <property type="match status" value="1"/>
</dbReference>
<dbReference type="Pfam" id="PF05326">
    <property type="entry name" value="SVA"/>
    <property type="match status" value="1"/>
</dbReference>
<dbReference type="PIRSF" id="PIRSF002572">
    <property type="entry name" value="PIP-GCDFP-15"/>
    <property type="match status" value="1"/>
</dbReference>
<dbReference type="SUPFAM" id="SSF81296">
    <property type="entry name" value="E set domains"/>
    <property type="match status" value="1"/>
</dbReference>
<organism>
    <name type="scientific">Homo sapiens</name>
    <name type="common">Human</name>
    <dbReference type="NCBI Taxonomy" id="9606"/>
    <lineage>
        <taxon>Eukaryota</taxon>
        <taxon>Metazoa</taxon>
        <taxon>Chordata</taxon>
        <taxon>Craniata</taxon>
        <taxon>Vertebrata</taxon>
        <taxon>Euteleostomi</taxon>
        <taxon>Mammalia</taxon>
        <taxon>Eutheria</taxon>
        <taxon>Euarchontoglires</taxon>
        <taxon>Primates</taxon>
        <taxon>Haplorrhini</taxon>
        <taxon>Catarrhini</taxon>
        <taxon>Hominidae</taxon>
        <taxon>Homo</taxon>
    </lineage>
</organism>
<accession>P12273</accession>
<accession>A0A963</accession>
<accession>A0A9C3</accession>
<accession>A0A9F3</accession>
<accession>A4D2I1</accession>
<keyword id="KW-0002">3D-structure</keyword>
<keyword id="KW-0009">Actin-binding</keyword>
<keyword id="KW-0903">Direct protein sequencing</keyword>
<keyword id="KW-1015">Disulfide bond</keyword>
<keyword id="KW-0325">Glycoprotein</keyword>
<keyword id="KW-1267">Proteomics identification</keyword>
<keyword id="KW-0873">Pyrrolidone carboxylic acid</keyword>
<keyword id="KW-1185">Reference proteome</keyword>
<keyword id="KW-0964">Secreted</keyword>
<keyword id="KW-0732">Signal</keyword>
<comment type="subunit">
    <text evidence="3">Monomer. Interacts with AZGP1.</text>
</comment>
<comment type="interaction">
    <interactant intactId="EBI-1049746">
        <id>P12273</id>
    </interactant>
    <interactant intactId="EBI-10968534">
        <id>P50570-2</id>
        <label>DNM2</label>
    </interactant>
    <organismsDiffer>false</organismsDiffer>
    <experiments>3</experiments>
</comment>
<comment type="interaction">
    <interactant intactId="EBI-1049746">
        <id>P12273</id>
    </interactant>
    <interactant intactId="EBI-25847109">
        <id>O14656-2</id>
        <label>TOR1A</label>
    </interactant>
    <organismsDiffer>false</organismsDiffer>
    <experiments>3</experiments>
</comment>
<comment type="subcellular location">
    <subcellularLocation>
        <location>Secreted</location>
    </subcellularLocation>
</comment>
<comment type="tissue specificity">
    <text>Expressed in pathological conditions of the mammary gland and in several exocrine tissues, such as the lacrimal, salivary, and sweat glands.</text>
</comment>
<comment type="induction">
    <text>By prolactin and androgen; inhibited by estrogen.</text>
</comment>
<comment type="similarity">
    <text evidence="6">Belongs to the PIP family.</text>
</comment>
<proteinExistence type="evidence at protein level"/>
<reference key="1">
    <citation type="journal article" date="1987" name="J. Biol. Chem.">
        <title>Isolation and sequencing of a cDNA clone for a prolactin-inducible protein (PIP). Regulation of PIP gene expression in the human breast cancer cell line, T-47D.</title>
        <authorList>
            <person name="Murphy L.C."/>
            <person name="Tsuyuki D."/>
            <person name="Myal Y."/>
            <person name="Shiu R.P.C."/>
        </authorList>
    </citation>
    <scope>NUCLEOTIDE SEQUENCE [MRNA]</scope>
</reference>
<reference key="2">
    <citation type="journal article" date="1991" name="Mol. Cell. Endocrinol.">
        <title>The prolactin-inducible protein (PIP/GCDFP-15) gene: cloning, structure and regulation.</title>
        <authorList>
            <person name="Myal Y."/>
            <person name="Iwasiow B."/>
            <person name="Tsuyuki D."/>
            <person name="Wong P."/>
            <person name="Shiu R.P.C."/>
        </authorList>
    </citation>
    <scope>NUCLEOTIDE SEQUENCE [GENOMIC DNA]</scope>
</reference>
<reference key="3">
    <citation type="journal article" date="1997" name="Immunogenetics">
        <title>Isolation from a human seminal vesicle library of the cDNA for gp17, a CD4 binding factor.</title>
        <authorList>
            <person name="Autiero M."/>
            <person name="Bouchier C."/>
            <person name="Basmaciogullari S."/>
            <person name="Zaborski P."/>
            <person name="el Marhomy S."/>
            <person name="Martin M."/>
            <person name="Guardiola J."/>
            <person name="Piatier-Tonneau D."/>
        </authorList>
    </citation>
    <scope>NUCLEOTIDE SEQUENCE [MRNA]</scope>
    <source>
        <tissue>Seminal vesicle</tissue>
    </source>
</reference>
<reference key="4">
    <citation type="journal article" date="2004" name="Nat. Genet.">
        <title>Complete sequencing and characterization of 21,243 full-length human cDNAs.</title>
        <authorList>
            <person name="Ota T."/>
            <person name="Suzuki Y."/>
            <person name="Nishikawa T."/>
            <person name="Otsuki T."/>
            <person name="Sugiyama T."/>
            <person name="Irie R."/>
            <person name="Wakamatsu A."/>
            <person name="Hayashi K."/>
            <person name="Sato H."/>
            <person name="Nagai K."/>
            <person name="Kimura K."/>
            <person name="Makita H."/>
            <person name="Sekine M."/>
            <person name="Obayashi M."/>
            <person name="Nishi T."/>
            <person name="Shibahara T."/>
            <person name="Tanaka T."/>
            <person name="Ishii S."/>
            <person name="Yamamoto J."/>
            <person name="Saito K."/>
            <person name="Kawai Y."/>
            <person name="Isono Y."/>
            <person name="Nakamura Y."/>
            <person name="Nagahari K."/>
            <person name="Murakami K."/>
            <person name="Yasuda T."/>
            <person name="Iwayanagi T."/>
            <person name="Wagatsuma M."/>
            <person name="Shiratori A."/>
            <person name="Sudo H."/>
            <person name="Hosoiri T."/>
            <person name="Kaku Y."/>
            <person name="Kodaira H."/>
            <person name="Kondo H."/>
            <person name="Sugawara M."/>
            <person name="Takahashi M."/>
            <person name="Kanda K."/>
            <person name="Yokoi T."/>
            <person name="Furuya T."/>
            <person name="Kikkawa E."/>
            <person name="Omura Y."/>
            <person name="Abe K."/>
            <person name="Kamihara K."/>
            <person name="Katsuta N."/>
            <person name="Sato K."/>
            <person name="Tanikawa M."/>
            <person name="Yamazaki M."/>
            <person name="Ninomiya K."/>
            <person name="Ishibashi T."/>
            <person name="Yamashita H."/>
            <person name="Murakawa K."/>
            <person name="Fujimori K."/>
            <person name="Tanai H."/>
            <person name="Kimata M."/>
            <person name="Watanabe M."/>
            <person name="Hiraoka S."/>
            <person name="Chiba Y."/>
            <person name="Ishida S."/>
            <person name="Ono Y."/>
            <person name="Takiguchi S."/>
            <person name="Watanabe S."/>
            <person name="Yosida M."/>
            <person name="Hotuta T."/>
            <person name="Kusano J."/>
            <person name="Kanehori K."/>
            <person name="Takahashi-Fujii A."/>
            <person name="Hara H."/>
            <person name="Tanase T.-O."/>
            <person name="Nomura Y."/>
            <person name="Togiya S."/>
            <person name="Komai F."/>
            <person name="Hara R."/>
            <person name="Takeuchi K."/>
            <person name="Arita M."/>
            <person name="Imose N."/>
            <person name="Musashino K."/>
            <person name="Yuuki H."/>
            <person name="Oshima A."/>
            <person name="Sasaki N."/>
            <person name="Aotsuka S."/>
            <person name="Yoshikawa Y."/>
            <person name="Matsunawa H."/>
            <person name="Ichihara T."/>
            <person name="Shiohata N."/>
            <person name="Sano S."/>
            <person name="Moriya S."/>
            <person name="Momiyama H."/>
            <person name="Satoh N."/>
            <person name="Takami S."/>
            <person name="Terashima Y."/>
            <person name="Suzuki O."/>
            <person name="Nakagawa S."/>
            <person name="Senoh A."/>
            <person name="Mizoguchi H."/>
            <person name="Goto Y."/>
            <person name="Shimizu F."/>
            <person name="Wakebe H."/>
            <person name="Hishigaki H."/>
            <person name="Watanabe T."/>
            <person name="Sugiyama A."/>
            <person name="Takemoto M."/>
            <person name="Kawakami B."/>
            <person name="Yamazaki M."/>
            <person name="Watanabe K."/>
            <person name="Kumagai A."/>
            <person name="Itakura S."/>
            <person name="Fukuzumi Y."/>
            <person name="Fujimori Y."/>
            <person name="Komiyama M."/>
            <person name="Tashiro H."/>
            <person name="Tanigami A."/>
            <person name="Fujiwara T."/>
            <person name="Ono T."/>
            <person name="Yamada K."/>
            <person name="Fujii Y."/>
            <person name="Ozaki K."/>
            <person name="Hirao M."/>
            <person name="Ohmori Y."/>
            <person name="Kawabata A."/>
            <person name="Hikiji T."/>
            <person name="Kobatake N."/>
            <person name="Inagaki H."/>
            <person name="Ikema Y."/>
            <person name="Okamoto S."/>
            <person name="Okitani R."/>
            <person name="Kawakami T."/>
            <person name="Noguchi S."/>
            <person name="Itoh T."/>
            <person name="Shigeta K."/>
            <person name="Senba T."/>
            <person name="Matsumura K."/>
            <person name="Nakajima Y."/>
            <person name="Mizuno T."/>
            <person name="Morinaga M."/>
            <person name="Sasaki M."/>
            <person name="Togashi T."/>
            <person name="Oyama M."/>
            <person name="Hata H."/>
            <person name="Watanabe M."/>
            <person name="Komatsu T."/>
            <person name="Mizushima-Sugano J."/>
            <person name="Satoh T."/>
            <person name="Shirai Y."/>
            <person name="Takahashi Y."/>
            <person name="Nakagawa K."/>
            <person name="Okumura K."/>
            <person name="Nagase T."/>
            <person name="Nomura N."/>
            <person name="Kikuchi H."/>
            <person name="Masuho Y."/>
            <person name="Yamashita R."/>
            <person name="Nakai K."/>
            <person name="Yada T."/>
            <person name="Nakamura Y."/>
            <person name="Ohara O."/>
            <person name="Isogai T."/>
            <person name="Sugano S."/>
        </authorList>
    </citation>
    <scope>NUCLEOTIDE SEQUENCE [LARGE SCALE MRNA]</scope>
    <source>
        <tissue>Trachea</tissue>
    </source>
</reference>
<reference key="5">
    <citation type="journal article" date="2003" name="Science">
        <title>Human chromosome 7: DNA sequence and biology.</title>
        <authorList>
            <person name="Scherer S.W."/>
            <person name="Cheung J."/>
            <person name="MacDonald J.R."/>
            <person name="Osborne L.R."/>
            <person name="Nakabayashi K."/>
            <person name="Herbrick J.-A."/>
            <person name="Carson A.R."/>
            <person name="Parker-Katiraee L."/>
            <person name="Skaug J."/>
            <person name="Khaja R."/>
            <person name="Zhang J."/>
            <person name="Hudek A.K."/>
            <person name="Li M."/>
            <person name="Haddad M."/>
            <person name="Duggan G.E."/>
            <person name="Fernandez B.A."/>
            <person name="Kanematsu E."/>
            <person name="Gentles S."/>
            <person name="Christopoulos C.C."/>
            <person name="Choufani S."/>
            <person name="Kwasnicka D."/>
            <person name="Zheng X.H."/>
            <person name="Lai Z."/>
            <person name="Nusskern D.R."/>
            <person name="Zhang Q."/>
            <person name="Gu Z."/>
            <person name="Lu F."/>
            <person name="Zeesman S."/>
            <person name="Nowaczyk M.J."/>
            <person name="Teshima I."/>
            <person name="Chitayat D."/>
            <person name="Shuman C."/>
            <person name="Weksberg R."/>
            <person name="Zackai E.H."/>
            <person name="Grebe T.A."/>
            <person name="Cox S.R."/>
            <person name="Kirkpatrick S.J."/>
            <person name="Rahman N."/>
            <person name="Friedman J.M."/>
            <person name="Heng H.H.Q."/>
            <person name="Pelicci P.G."/>
            <person name="Lo-Coco F."/>
            <person name="Belloni E."/>
            <person name="Shaffer L.G."/>
            <person name="Pober B."/>
            <person name="Morton C.C."/>
            <person name="Gusella J.F."/>
            <person name="Bruns G.A.P."/>
            <person name="Korf B.R."/>
            <person name="Quade B.J."/>
            <person name="Ligon A.H."/>
            <person name="Ferguson H."/>
            <person name="Higgins A.W."/>
            <person name="Leach N.T."/>
            <person name="Herrick S.R."/>
            <person name="Lemyre E."/>
            <person name="Farra C.G."/>
            <person name="Kim H.-G."/>
            <person name="Summers A.M."/>
            <person name="Gripp K.W."/>
            <person name="Roberts W."/>
            <person name="Szatmari P."/>
            <person name="Winsor E.J.T."/>
            <person name="Grzeschik K.-H."/>
            <person name="Teebi A."/>
            <person name="Minassian B.A."/>
            <person name="Kere J."/>
            <person name="Armengol L."/>
            <person name="Pujana M.A."/>
            <person name="Estivill X."/>
            <person name="Wilson M.D."/>
            <person name="Koop B.F."/>
            <person name="Tosi S."/>
            <person name="Moore G.E."/>
            <person name="Boright A.P."/>
            <person name="Zlotorynski E."/>
            <person name="Kerem B."/>
            <person name="Kroisel P.M."/>
            <person name="Petek E."/>
            <person name="Oscier D.G."/>
            <person name="Mould S.J."/>
            <person name="Doehner H."/>
            <person name="Doehner K."/>
            <person name="Rommens J.M."/>
            <person name="Vincent J.B."/>
            <person name="Venter J.C."/>
            <person name="Li P.W."/>
            <person name="Mural R.J."/>
            <person name="Adams M.D."/>
            <person name="Tsui L.-C."/>
        </authorList>
    </citation>
    <scope>NUCLEOTIDE SEQUENCE [LARGE SCALE GENOMIC DNA]</scope>
</reference>
<reference key="6">
    <citation type="submission" date="2005-09" db="EMBL/GenBank/DDBJ databases">
        <authorList>
            <person name="Mural R.J."/>
            <person name="Istrail S."/>
            <person name="Sutton G.G."/>
            <person name="Florea L."/>
            <person name="Halpern A.L."/>
            <person name="Mobarry C.M."/>
            <person name="Lippert R."/>
            <person name="Walenz B."/>
            <person name="Shatkay H."/>
            <person name="Dew I."/>
            <person name="Miller J.R."/>
            <person name="Flanigan M.J."/>
            <person name="Edwards N.J."/>
            <person name="Bolanos R."/>
            <person name="Fasulo D."/>
            <person name="Halldorsson B.V."/>
            <person name="Hannenhalli S."/>
            <person name="Turner R."/>
            <person name="Yooseph S."/>
            <person name="Lu F."/>
            <person name="Nusskern D.R."/>
            <person name="Shue B.C."/>
            <person name="Zheng X.H."/>
            <person name="Zhong F."/>
            <person name="Delcher A.L."/>
            <person name="Huson D.H."/>
            <person name="Kravitz S.A."/>
            <person name="Mouchard L."/>
            <person name="Reinert K."/>
            <person name="Remington K.A."/>
            <person name="Clark A.G."/>
            <person name="Waterman M.S."/>
            <person name="Eichler E.E."/>
            <person name="Adams M.D."/>
            <person name="Hunkapiller M.W."/>
            <person name="Myers E.W."/>
            <person name="Venter J.C."/>
        </authorList>
    </citation>
    <scope>NUCLEOTIDE SEQUENCE [LARGE SCALE GENOMIC DNA]</scope>
</reference>
<reference key="7">
    <citation type="journal article" date="2004" name="Genome Res.">
        <title>The status, quality, and expansion of the NIH full-length cDNA project: the Mammalian Gene Collection (MGC).</title>
        <authorList>
            <consortium name="The MGC Project Team"/>
        </authorList>
    </citation>
    <scope>NUCLEOTIDE SEQUENCE [LARGE SCALE MRNA]</scope>
    <source>
        <tissue>Prostate</tissue>
    </source>
</reference>
<reference key="8">
    <citation type="journal article" date="1991" name="Eur. J. Biochem.">
        <title>Primary structure of a new actin-binding protein from human seminal plasma.</title>
        <authorList>
            <person name="Schaller J."/>
            <person name="Akiyama K."/>
            <person name="Kimura H."/>
            <person name="Hess D."/>
            <person name="Affolter M."/>
            <person name="Rickli E.E."/>
        </authorList>
    </citation>
    <scope>PROTEIN SEQUENCE OF 29-146</scope>
    <scope>PYROGLUTAMATE FORMATION AT GLN-29</scope>
    <scope>DISULFIDE BONDS</scope>
    <scope>GLYCOSYLATION AT ASN-105</scope>
</reference>
<reference key="9">
    <citation type="journal article" date="2015" name="J. Proteome Res.">
        <title>Human basal tear peptidome characterization by CID, HCD, and ETD followed by in silico and in vitro analyses for antimicrobial peptide identification.</title>
        <authorList>
            <person name="Azkargorta M."/>
            <person name="Soria J."/>
            <person name="Ojeda C."/>
            <person name="Guzman F."/>
            <person name="Acera A."/>
            <person name="Iloro I."/>
            <person name="Suarez T."/>
            <person name="Elortza F."/>
        </authorList>
    </citation>
    <scope>PROTEIN SEQUENCE OF 29-55 AND 127-146</scope>
    <scope>IDENTIFICATION BY MASS SPECTROMETRY</scope>
    <scope>PYROGLUTAMATE FORMATION AT GLN-29</scope>
    <source>
        <tissue>Tear</tissue>
    </source>
</reference>
<reference key="10">
    <citation type="journal article" date="2006" name="Gene">
        <title>Origin and evolution of gene for prolactin-induced protein.</title>
        <authorList>
            <person name="Kitano T."/>
            <person name="Tian W."/>
            <person name="Umetsu K."/>
            <person name="Yuasa I."/>
            <person name="Yamazaki K."/>
            <person name="Saitou N."/>
            <person name="Osawa M."/>
        </authorList>
    </citation>
    <scope>NUCLEOTIDE SEQUENCE [GENOMIC DNA] OF 33-146</scope>
</reference>
<reference key="11">
    <citation type="journal article" date="2006" name="J. Proteome Res.">
        <title>Identification of N-linked glycoproteins in human saliva by glycoprotein capture and mass spectrometry.</title>
        <authorList>
            <person name="Ramachandran P."/>
            <person name="Boontheung P."/>
            <person name="Xie Y."/>
            <person name="Sondej M."/>
            <person name="Wong D.T."/>
            <person name="Loo J.A."/>
        </authorList>
    </citation>
    <scope>GLYCOSYLATION [LARGE SCALE ANALYSIS] AT ASN-105</scope>
    <source>
        <tissue>Saliva</tissue>
    </source>
</reference>
<reference key="12">
    <citation type="journal article" date="2008" name="Proteomics">
        <title>Identification of N-linked glycoproteins in human milk by hydrophilic interaction liquid chromatography and mass spectrometry.</title>
        <authorList>
            <person name="Picariello G."/>
            <person name="Ferranti P."/>
            <person name="Mamone G."/>
            <person name="Roepstorff P."/>
            <person name="Addeo F."/>
        </authorList>
    </citation>
    <scope>GLYCOSYLATION [LARGE SCALE ANALYSIS] AT ASN-105</scope>
    <source>
        <tissue>Milk</tissue>
    </source>
</reference>
<reference key="13">
    <citation type="journal article" date="2008" name="J. Mol. Biol.">
        <title>Crystal structure of the novel complex formed between zinc alpha2-glycoprotein (ZAG) and prolactin-inducible protein (PIP) from human seminal plasma.</title>
        <authorList>
            <person name="Hassan M.I."/>
            <person name="Bilgrami S."/>
            <person name="Kumar V."/>
            <person name="Singh N."/>
            <person name="Yadav S."/>
            <person name="Kaur P."/>
            <person name="Singh T.P."/>
        </authorList>
    </citation>
    <scope>X-RAY CRYSTALLOGRAPHY (3.2 ANGSTROMS) OF 29-146 IN COMPLEX WITH AZGP1</scope>
    <scope>DISULFIDE BONDS</scope>
    <scope>GLYCOSYLATION AT ASN-105</scope>
</reference>
<name>PIP_HUMAN</name>
<feature type="signal peptide" evidence="4 5">
    <location>
        <begin position="1"/>
        <end position="28"/>
    </location>
</feature>
<feature type="chain" id="PRO_0000024288" description="Prolactin-inducible protein" evidence="4">
    <location>
        <begin position="29"/>
        <end position="146"/>
    </location>
</feature>
<feature type="modified residue" description="Pyrrolidone carboxylic acid" evidence="4 5">
    <location>
        <position position="29"/>
    </location>
</feature>
<feature type="glycosylation site" description="N-linked (GlcNAc...) asparagine" evidence="1 2 3 4">
    <location>
        <position position="105"/>
    </location>
</feature>
<feature type="disulfide bond" evidence="4">
    <location>
        <begin position="65"/>
        <end position="91"/>
    </location>
</feature>
<feature type="disulfide bond" evidence="4">
    <location>
        <begin position="89"/>
        <end position="123"/>
    </location>
</feature>
<feature type="strand" evidence="7">
    <location>
        <begin position="44"/>
        <end position="46"/>
    </location>
</feature>
<feature type="strand" evidence="7">
    <location>
        <begin position="52"/>
        <end position="60"/>
    </location>
</feature>
<feature type="strand" evidence="7">
    <location>
        <begin position="66"/>
        <end position="76"/>
    </location>
</feature>
<feature type="helix" evidence="7">
    <location>
        <begin position="81"/>
        <end position="83"/>
    </location>
</feature>
<feature type="strand" evidence="7">
    <location>
        <begin position="85"/>
        <end position="90"/>
    </location>
</feature>
<feature type="strand" evidence="7">
    <location>
        <begin position="92"/>
        <end position="94"/>
    </location>
</feature>
<feature type="strand" evidence="7">
    <location>
        <begin position="96"/>
        <end position="102"/>
    </location>
</feature>
<feature type="strand" evidence="7">
    <location>
        <begin position="108"/>
        <end position="116"/>
    </location>
</feature>
<feature type="strand" evidence="7">
    <location>
        <begin position="120"/>
        <end position="123"/>
    </location>
</feature>
<feature type="helix" evidence="7">
    <location>
        <begin position="124"/>
        <end position="126"/>
    </location>
</feature>
<feature type="strand" evidence="7">
    <location>
        <begin position="136"/>
        <end position="145"/>
    </location>
</feature>
<evidence type="ECO:0000269" key="1">
    <source>
    </source>
</evidence>
<evidence type="ECO:0000269" key="2">
    <source>
    </source>
</evidence>
<evidence type="ECO:0000269" key="3">
    <source>
    </source>
</evidence>
<evidence type="ECO:0000269" key="4">
    <source>
    </source>
</evidence>
<evidence type="ECO:0000269" key="5">
    <source>
    </source>
</evidence>
<evidence type="ECO:0000305" key="6"/>
<evidence type="ECO:0007829" key="7">
    <source>
        <dbReference type="PDB" id="3ES6"/>
    </source>
</evidence>